<accession>Q28G67</accession>
<accession>Q6DIQ7</accession>
<keyword id="KW-0025">Alternative splicing</keyword>
<keyword id="KW-0966">Cell projection</keyword>
<keyword id="KW-0539">Nucleus</keyword>
<keyword id="KW-1185">Reference proteome</keyword>
<name>ABITM_XENTR</name>
<comment type="function">
    <text evidence="1">May regulate actin polymerization, filopodia dynamics and arborization of neurons.</text>
</comment>
<comment type="subcellular location">
    <subcellularLocation>
        <location evidence="1">Nucleus speckle</location>
    </subcellularLocation>
    <subcellularLocation>
        <location evidence="1">Cell projection</location>
        <location evidence="1">Lamellipodium</location>
    </subcellularLocation>
    <subcellularLocation>
        <location evidence="1">Nucleus</location>
    </subcellularLocation>
    <subcellularLocation>
        <location evidence="1">Cell projection</location>
        <location evidence="1">Growth cone</location>
    </subcellularLocation>
    <subcellularLocation>
        <location evidence="1">Cell projection</location>
        <location evidence="1">Dendrite</location>
    </subcellularLocation>
    <text evidence="1">Localizes to somata and dendrites in cortical neurons.</text>
</comment>
<comment type="alternative products">
    <event type="alternative splicing"/>
    <isoform>
        <id>Q28G67-1</id>
        <name>1</name>
        <sequence type="displayed"/>
    </isoform>
    <isoform>
        <id>Q28G67-2</id>
        <name>2</name>
        <sequence type="described" ref="VSP_026315"/>
    </isoform>
</comment>
<comment type="similarity">
    <text evidence="3">Belongs to the ABITRAM family.</text>
</comment>
<dbReference type="EMBL" id="CR761531">
    <property type="protein sequence ID" value="CAJ82750.1"/>
    <property type="molecule type" value="mRNA"/>
</dbReference>
<dbReference type="EMBL" id="BC075478">
    <property type="protein sequence ID" value="AAH75478.1"/>
    <property type="molecule type" value="mRNA"/>
</dbReference>
<dbReference type="RefSeq" id="NP_001004966.1">
    <molecule id="Q28G67-2"/>
    <property type="nucleotide sequence ID" value="NM_001004966.1"/>
</dbReference>
<dbReference type="RefSeq" id="XP_012819979.1">
    <molecule id="Q28G67-2"/>
    <property type="nucleotide sequence ID" value="XM_012964525.3"/>
</dbReference>
<dbReference type="RefSeq" id="XP_012819980.1">
    <molecule id="Q28G67-1"/>
    <property type="nucleotide sequence ID" value="XM_012964526.3"/>
</dbReference>
<dbReference type="RefSeq" id="XP_012819981.1">
    <molecule id="Q28G67-1"/>
    <property type="nucleotide sequence ID" value="XM_012964527.3"/>
</dbReference>
<dbReference type="SMR" id="Q28G67"/>
<dbReference type="FunCoup" id="Q28G67">
    <property type="interactions" value="1042"/>
</dbReference>
<dbReference type="STRING" id="8364.ENSXETP00000014348"/>
<dbReference type="GeneID" id="448390"/>
<dbReference type="KEGG" id="xtr:448390"/>
<dbReference type="AGR" id="Xenbase:XB-GENE-6458491"/>
<dbReference type="CTD" id="54942"/>
<dbReference type="Xenbase" id="XB-GENE-6458491">
    <property type="gene designation" value="abitram"/>
</dbReference>
<dbReference type="InParanoid" id="Q28G67"/>
<dbReference type="OMA" id="YFEHEDQ"/>
<dbReference type="OrthoDB" id="48130at2759"/>
<dbReference type="TreeFam" id="TF313930"/>
<dbReference type="Proteomes" id="UP000008143">
    <property type="component" value="Chromosome 6"/>
</dbReference>
<dbReference type="Bgee" id="ENSXETG00000027667">
    <property type="expression patterns" value="Expressed in ovary and 16 other cell types or tissues"/>
</dbReference>
<dbReference type="GO" id="GO:0030425">
    <property type="term" value="C:dendrite"/>
    <property type="evidence" value="ECO:0007669"/>
    <property type="project" value="UniProtKB-SubCell"/>
</dbReference>
<dbReference type="GO" id="GO:0032433">
    <property type="term" value="C:filopodium tip"/>
    <property type="evidence" value="ECO:0000250"/>
    <property type="project" value="UniProtKB"/>
</dbReference>
<dbReference type="GO" id="GO:0030426">
    <property type="term" value="C:growth cone"/>
    <property type="evidence" value="ECO:0000250"/>
    <property type="project" value="UniProtKB"/>
</dbReference>
<dbReference type="GO" id="GO:0030027">
    <property type="term" value="C:lamellipodium"/>
    <property type="evidence" value="ECO:0000250"/>
    <property type="project" value="UniProtKB"/>
</dbReference>
<dbReference type="GO" id="GO:0016607">
    <property type="term" value="C:nuclear speck"/>
    <property type="evidence" value="ECO:0007669"/>
    <property type="project" value="UniProtKB-SubCell"/>
</dbReference>
<dbReference type="GO" id="GO:0048813">
    <property type="term" value="P:dendrite morphogenesis"/>
    <property type="evidence" value="ECO:0000250"/>
    <property type="project" value="UniProtKB"/>
</dbReference>
<dbReference type="GO" id="GO:0030833">
    <property type="term" value="P:regulation of actin filament polymerization"/>
    <property type="evidence" value="ECO:0000250"/>
    <property type="project" value="UniProtKB"/>
</dbReference>
<dbReference type="GO" id="GO:0051489">
    <property type="term" value="P:regulation of filopodium assembly"/>
    <property type="evidence" value="ECO:0000250"/>
    <property type="project" value="UniProtKB"/>
</dbReference>
<dbReference type="FunFam" id="2.40.50.100:FF:000048">
    <property type="entry name" value="Protein Abitram"/>
    <property type="match status" value="1"/>
</dbReference>
<dbReference type="Gene3D" id="2.40.50.100">
    <property type="match status" value="1"/>
</dbReference>
<dbReference type="InterPro" id="IPR039169">
    <property type="entry name" value="Abitram"/>
</dbReference>
<dbReference type="InterPro" id="IPR033753">
    <property type="entry name" value="GCV_H/Fam206"/>
</dbReference>
<dbReference type="InterPro" id="IPR011053">
    <property type="entry name" value="Single_hybrid_motif"/>
</dbReference>
<dbReference type="PANTHER" id="PTHR13651">
    <property type="entry name" value="PROTEIN ABITRAM"/>
    <property type="match status" value="1"/>
</dbReference>
<dbReference type="PANTHER" id="PTHR13651:SF0">
    <property type="entry name" value="PROTEIN ABITRAM"/>
    <property type="match status" value="1"/>
</dbReference>
<dbReference type="Pfam" id="PF01597">
    <property type="entry name" value="GCV_H"/>
    <property type="match status" value="1"/>
</dbReference>
<dbReference type="SUPFAM" id="SSF51230">
    <property type="entry name" value="Single hybrid motif"/>
    <property type="match status" value="1"/>
</dbReference>
<organism>
    <name type="scientific">Xenopus tropicalis</name>
    <name type="common">Western clawed frog</name>
    <name type="synonym">Silurana tropicalis</name>
    <dbReference type="NCBI Taxonomy" id="8364"/>
    <lineage>
        <taxon>Eukaryota</taxon>
        <taxon>Metazoa</taxon>
        <taxon>Chordata</taxon>
        <taxon>Craniata</taxon>
        <taxon>Vertebrata</taxon>
        <taxon>Euteleostomi</taxon>
        <taxon>Amphibia</taxon>
        <taxon>Batrachia</taxon>
        <taxon>Anura</taxon>
        <taxon>Pipoidea</taxon>
        <taxon>Pipidae</taxon>
        <taxon>Xenopodinae</taxon>
        <taxon>Xenopus</taxon>
        <taxon>Silurana</taxon>
    </lineage>
</organism>
<proteinExistence type="evidence at transcript level"/>
<protein>
    <recommendedName>
        <fullName evidence="3">Protein Abitram</fullName>
    </recommendedName>
    <alternativeName>
        <fullName>Actin-binding transcription modulator</fullName>
    </alternativeName>
    <alternativeName>
        <fullName>Protein Simiate</fullName>
    </alternativeName>
</protein>
<feature type="chain" id="PRO_0000291934" description="Protein Abitram">
    <location>
        <begin position="1"/>
        <end position="183"/>
    </location>
</feature>
<feature type="splice variant" id="VSP_026315" description="In isoform 2." evidence="2">
    <original>R</original>
    <variation>RGRPFIFQQDNARPHSASITTSWLRRRRIRVLKWPVCSPDLSPIENIWHIIQRK</variation>
    <location>
        <position position="86"/>
    </location>
</feature>
<gene>
    <name type="primary">abitram</name>
    <name type="synonym">fam206a</name>
    <name type="ORF">TGas009a04.1</name>
</gene>
<sequence>MAEECNKLLEFPSVVDRYFKRWYKSDVKGKPCEDHCILQHSNRICIITLAECHPLLQNGKTIKTISYQISANCSRLQNKVSGKSKRGAQFLTEHAPLCRISSTDGEEYTIYSCIRGRLLEVNENILQNPELLKEKPSTEGYIAVVLPKFEESKTVTEGLLSQQEYEEILLSRAAVGSGTVSAV</sequence>
<evidence type="ECO:0000250" key="1">
    <source>
        <dbReference type="UniProtKB" id="Q80ZQ9"/>
    </source>
</evidence>
<evidence type="ECO:0000303" key="2">
    <source ref="2"/>
</evidence>
<evidence type="ECO:0000305" key="3"/>
<reference key="1">
    <citation type="submission" date="2006-10" db="EMBL/GenBank/DDBJ databases">
        <authorList>
            <consortium name="Sanger Xenopus tropicalis EST/cDNA project"/>
        </authorList>
    </citation>
    <scope>NUCLEOTIDE SEQUENCE [LARGE SCALE MRNA] (ISOFORM 1)</scope>
    <source>
        <tissue>Gastrula</tissue>
    </source>
</reference>
<reference key="2">
    <citation type="submission" date="2004-06" db="EMBL/GenBank/DDBJ databases">
        <authorList>
            <consortium name="NIH - Xenopus Gene Collection (XGC) project"/>
        </authorList>
    </citation>
    <scope>NUCLEOTIDE SEQUENCE [LARGE SCALE MRNA] (ISOFORM 2)</scope>
    <source>
        <tissue>Embryo</tissue>
    </source>
</reference>